<comment type="catalytic activity">
    <reaction>
        <text>(1,4-alpha-D-galacturonosyl)n+m + H2O = (1,4-alpha-D-galacturonosyl)n + (1,4-alpha-D-galacturonosyl)m.</text>
        <dbReference type="EC" id="3.2.1.15"/>
    </reaction>
</comment>
<comment type="subcellular location">
    <subcellularLocation>
        <location>Secreted</location>
    </subcellularLocation>
    <subcellularLocation>
        <location>Secreted</location>
        <location>Cell wall</location>
    </subcellularLocation>
</comment>
<comment type="allergen">
    <text>Causes an allergic reaction in human. Binds to IgE.</text>
</comment>
<comment type="similarity">
    <text evidence="4">Belongs to the glycosyl hydrolase 28 family.</text>
</comment>
<accession>Q7M1E7</accession>
<proteinExistence type="evidence at protein level"/>
<sequence>MGMKFMAAVAFLALQLIVMAAAEDQSAQIMLDSDIEQYLRSNRSLKKLVHSRHDAATVFNVEQYGAVGDGKHDSTEAFATTWNAACKKASAVLLVPANKKFFVNNLVFRGPCQPHLSFKVDGTIVAQPDPARWKNSKIWLQFAQLTDFNLMGTGVIDGQGQQWWAGQCKVVNGRTVCNDRNRPTAIKIDYSKSVTVKELTLMNSPEFHLVFGECEGVKIQGLKIKAPRDSPNTDGIDIFASKRFHIEKCVIGTGDDCIAIGTGSSNITIKDLICGPGHGISIGSLGRDNSRAEVSHVHVNRAKFIDTQNGLRIKTWQGGSGLASYITYENVEMINSENPILINQFYCTSASACQNQRSAVQIQGVTYKNIHGTSATAAAIQLMCSDSVPCTGIQLSNVSLKLTSGKPASCVDKNARGFYSGRLIPTCKNLRPGPSPKEFELQQQPTTVMDENKGACAKGDSTCISLSSSPPNCKNKCKGCQPCKPKLIIVHPNKPQDYYPQKWVCSCHNKIYNP</sequence>
<reference key="1">
    <citation type="journal article" date="1999" name="Biochem. Biophys. Res. Commun.">
        <title>Purification, identification, and cDNA cloning of Cha o 2, the second major allergen of Japanese cypress pollen.</title>
        <authorList>
            <person name="Mori T."/>
            <person name="Yokoyama M."/>
            <person name="Komiyama N."/>
            <person name="Okano M."/>
            <person name="Kino K."/>
        </authorList>
    </citation>
    <scope>NUCLEOTIDE SEQUENCE</scope>
    <scope>PROTEIN SEQUENCE OF 51-62</scope>
    <source>
        <tissue>Pollen</tissue>
    </source>
</reference>
<protein>
    <recommendedName>
        <fullName>Polygalacturonase</fullName>
        <shortName>PG</shortName>
        <ecNumber>3.2.1.15</ecNumber>
    </recommendedName>
    <alternativeName>
        <fullName>Major pollen allergen Cha o 2</fullName>
    </alternativeName>
    <alternativeName>
        <fullName>Pectinase</fullName>
    </alternativeName>
    <allergenName>Cha o 2</allergenName>
</protein>
<name>PGLR2_CHAOB</name>
<keyword id="KW-0020">Allergen</keyword>
<keyword id="KW-0134">Cell wall</keyword>
<keyword id="KW-0961">Cell wall biogenesis/degradation</keyword>
<keyword id="KW-0903">Direct protein sequencing</keyword>
<keyword id="KW-0292">Fruit ripening</keyword>
<keyword id="KW-0325">Glycoprotein</keyword>
<keyword id="KW-0326">Glycosidase</keyword>
<keyword id="KW-0378">Hydrolase</keyword>
<keyword id="KW-0677">Repeat</keyword>
<keyword id="KW-0964">Secreted</keyword>
<keyword id="KW-0732">Signal</keyword>
<keyword id="KW-0865">Zymogen</keyword>
<feature type="signal peptide" evidence="1">
    <location>
        <begin position="1"/>
        <end position="22"/>
    </location>
</feature>
<feature type="propeptide" id="PRO_0000024814" evidence="3">
    <location>
        <begin position="23"/>
        <end position="50"/>
    </location>
</feature>
<feature type="chain" id="PRO_0000024815" description="Polygalacturonase">
    <location>
        <begin position="51"/>
        <end position="514"/>
    </location>
</feature>
<feature type="repeat" description="PbH1 1">
    <location>
        <begin position="214"/>
        <end position="240"/>
    </location>
</feature>
<feature type="repeat" description="PbH1 2">
    <location>
        <begin position="241"/>
        <end position="262"/>
    </location>
</feature>
<feature type="repeat" description="PbH1 3">
    <location>
        <begin position="264"/>
        <end position="284"/>
    </location>
</feature>
<feature type="repeat" description="PbH1 4">
    <location>
        <begin position="294"/>
        <end position="315"/>
    </location>
</feature>
<feature type="repeat" description="PbH1 5">
    <location>
        <begin position="323"/>
        <end position="344"/>
    </location>
</feature>
<feature type="repeat" description="PbH1 6">
    <location>
        <begin position="357"/>
        <end position="384"/>
    </location>
</feature>
<feature type="active site" description="Proton donor" evidence="2">
    <location>
        <position position="255"/>
    </location>
</feature>
<feature type="active site" evidence="2">
    <location>
        <position position="278"/>
    </location>
</feature>
<feature type="glycosylation site" description="N-linked (GlcNAc...) asparagine" evidence="1">
    <location>
        <position position="266"/>
    </location>
</feature>
<feature type="glycosylation site" description="N-linked (GlcNAc...) asparagine" evidence="1">
    <location>
        <position position="397"/>
    </location>
</feature>
<evidence type="ECO:0000255" key="1"/>
<evidence type="ECO:0000255" key="2">
    <source>
        <dbReference type="PROSITE-ProRule" id="PRU10052"/>
    </source>
</evidence>
<evidence type="ECO:0000269" key="3">
    <source>
    </source>
</evidence>
<evidence type="ECO:0000305" key="4"/>
<organism>
    <name type="scientific">Chamaecyparis obtusa</name>
    <name type="common">Hinoki false-cypress</name>
    <name type="synonym">Retinospora obtusa</name>
    <dbReference type="NCBI Taxonomy" id="13415"/>
    <lineage>
        <taxon>Eukaryota</taxon>
        <taxon>Viridiplantae</taxon>
        <taxon>Streptophyta</taxon>
        <taxon>Embryophyta</taxon>
        <taxon>Tracheophyta</taxon>
        <taxon>Spermatophyta</taxon>
        <taxon>Pinopsida</taxon>
        <taxon>Pinidae</taxon>
        <taxon>Conifers II</taxon>
        <taxon>Cupressales</taxon>
        <taxon>Cupressaceae</taxon>
        <taxon>Chamaecyparis</taxon>
    </lineage>
</organism>
<dbReference type="EC" id="3.2.1.15"/>
<dbReference type="PIR" id="JC7100">
    <property type="entry name" value="JC7100"/>
</dbReference>
<dbReference type="SMR" id="Q7M1E7"/>
<dbReference type="Allergome" id="198">
    <property type="allergen name" value="Cha o 2"/>
</dbReference>
<dbReference type="Allergome" id="3187">
    <property type="allergen name" value="Cha o 2.0101"/>
</dbReference>
<dbReference type="CAZy" id="GH28">
    <property type="family name" value="Glycoside Hydrolase Family 28"/>
</dbReference>
<dbReference type="GO" id="GO:0005576">
    <property type="term" value="C:extracellular region"/>
    <property type="evidence" value="ECO:0007669"/>
    <property type="project" value="UniProtKB-SubCell"/>
</dbReference>
<dbReference type="GO" id="GO:0004650">
    <property type="term" value="F:polygalacturonase activity"/>
    <property type="evidence" value="ECO:0007669"/>
    <property type="project" value="UniProtKB-EC"/>
</dbReference>
<dbReference type="GO" id="GO:0005975">
    <property type="term" value="P:carbohydrate metabolic process"/>
    <property type="evidence" value="ECO:0007669"/>
    <property type="project" value="InterPro"/>
</dbReference>
<dbReference type="GO" id="GO:0071555">
    <property type="term" value="P:cell wall organization"/>
    <property type="evidence" value="ECO:0007669"/>
    <property type="project" value="UniProtKB-KW"/>
</dbReference>
<dbReference type="GO" id="GO:0009835">
    <property type="term" value="P:fruit ripening"/>
    <property type="evidence" value="ECO:0007669"/>
    <property type="project" value="UniProtKB-KW"/>
</dbReference>
<dbReference type="FunFam" id="2.160.20.10:FF:000032">
    <property type="entry name" value="Pectin lyase-like superfamily protein"/>
    <property type="match status" value="1"/>
</dbReference>
<dbReference type="Gene3D" id="2.160.20.10">
    <property type="entry name" value="Single-stranded right-handed beta-helix, Pectin lyase-like"/>
    <property type="match status" value="1"/>
</dbReference>
<dbReference type="InterPro" id="IPR000743">
    <property type="entry name" value="Glyco_hydro_28"/>
</dbReference>
<dbReference type="InterPro" id="IPR006626">
    <property type="entry name" value="PbH1"/>
</dbReference>
<dbReference type="InterPro" id="IPR012334">
    <property type="entry name" value="Pectin_lyas_fold"/>
</dbReference>
<dbReference type="InterPro" id="IPR011050">
    <property type="entry name" value="Pectin_lyase_fold/virulence"/>
</dbReference>
<dbReference type="PANTHER" id="PTHR31375">
    <property type="match status" value="1"/>
</dbReference>
<dbReference type="Pfam" id="PF17181">
    <property type="entry name" value="EPF"/>
    <property type="match status" value="1"/>
</dbReference>
<dbReference type="Pfam" id="PF00295">
    <property type="entry name" value="Glyco_hydro_28"/>
    <property type="match status" value="1"/>
</dbReference>
<dbReference type="SMART" id="SM00710">
    <property type="entry name" value="PbH1"/>
    <property type="match status" value="5"/>
</dbReference>
<dbReference type="SUPFAM" id="SSF51126">
    <property type="entry name" value="Pectin lyase-like"/>
    <property type="match status" value="1"/>
</dbReference>
<dbReference type="PROSITE" id="PS00502">
    <property type="entry name" value="POLYGALACTURONASE"/>
    <property type="match status" value="1"/>
</dbReference>